<evidence type="ECO:0000255" key="1">
    <source>
        <dbReference type="HAMAP-Rule" id="MF_04006"/>
    </source>
</evidence>
<evidence type="ECO:0000305" key="2"/>
<keyword id="KW-0010">Activator</keyword>
<keyword id="KW-0238">DNA-binding</keyword>
<keyword id="KW-0244">Early protein</keyword>
<keyword id="KW-1035">Host cytoplasm</keyword>
<keyword id="KW-1048">Host nucleus</keyword>
<keyword id="KW-0945">Host-virus interaction</keyword>
<keyword id="KW-1090">Inhibition of host innate immune response by virus</keyword>
<keyword id="KW-0479">Metal-binding</keyword>
<keyword id="KW-1119">Modulation of host cell apoptosis by virus</keyword>
<keyword id="KW-0804">Transcription</keyword>
<keyword id="KW-0805">Transcription regulation</keyword>
<keyword id="KW-0899">Viral immunoevasion</keyword>
<keyword id="KW-0862">Zinc</keyword>
<keyword id="KW-0863">Zinc-finger</keyword>
<accession>Q02269</accession>
<sequence length="150" mass="17328">MESANASTPAKTIDQLCKECNLSMHSLQILCVFCRKTLSTAEVYAFQYKSLYIVWRGQFPFAACACCLEIQGKINQFRHFDFAGFAVTVEEDTKQSILDVLIRCYLCHKPLCEVEKLRHILQKARFIKLNSSWKGRCFHCWSSCMENILP</sequence>
<proteinExistence type="inferred from homology"/>
<feature type="chain" id="PRO_0000133333" description="Protein E6">
    <location>
        <begin position="1"/>
        <end position="150"/>
    </location>
</feature>
<feature type="zinc finger region" evidence="1">
    <location>
        <begin position="31"/>
        <end position="67"/>
    </location>
</feature>
<feature type="zinc finger region" evidence="1">
    <location>
        <begin position="104"/>
        <end position="140"/>
    </location>
</feature>
<protein>
    <recommendedName>
        <fullName evidence="1">Protein E6</fullName>
    </recommendedName>
</protein>
<gene>
    <name evidence="1" type="primary">E6</name>
</gene>
<name>VE6_HPV13</name>
<reference key="1">
    <citation type="journal article" date="1992" name="Virology">
        <title>Human papillomavirus type 13 and pygmy chimpanzee papillomavirus type 1: comparison of the genome organizations.</title>
        <authorList>
            <person name="van Ranst M."/>
            <person name="Fuse A."/>
            <person name="Fiten P."/>
            <person name="Beuken E."/>
            <person name="Pfister H."/>
            <person name="Burk R.D."/>
            <person name="Opdenakker G."/>
        </authorList>
    </citation>
    <scope>NUCLEOTIDE SEQUENCE [GENOMIC DNA]</scope>
</reference>
<dbReference type="EMBL" id="X62843">
    <property type="protein sequence ID" value="CAA44647.1"/>
    <property type="molecule type" value="Genomic_DNA"/>
</dbReference>
<dbReference type="PIR" id="A42955">
    <property type="entry name" value="W6WL13"/>
</dbReference>
<dbReference type="SMR" id="Q02269"/>
<dbReference type="Proteomes" id="UP000009107">
    <property type="component" value="Genome"/>
</dbReference>
<dbReference type="GO" id="GO:0030430">
    <property type="term" value="C:host cell cytoplasm"/>
    <property type="evidence" value="ECO:0007669"/>
    <property type="project" value="UniProtKB-SubCell"/>
</dbReference>
<dbReference type="GO" id="GO:0042025">
    <property type="term" value="C:host cell nucleus"/>
    <property type="evidence" value="ECO:0007669"/>
    <property type="project" value="UniProtKB-SubCell"/>
</dbReference>
<dbReference type="GO" id="GO:0003677">
    <property type="term" value="F:DNA binding"/>
    <property type="evidence" value="ECO:0007669"/>
    <property type="project" value="UniProtKB-UniRule"/>
</dbReference>
<dbReference type="GO" id="GO:0008270">
    <property type="term" value="F:zinc ion binding"/>
    <property type="evidence" value="ECO:0007669"/>
    <property type="project" value="UniProtKB-KW"/>
</dbReference>
<dbReference type="GO" id="GO:0006351">
    <property type="term" value="P:DNA-templated transcription"/>
    <property type="evidence" value="ECO:0007669"/>
    <property type="project" value="UniProtKB-UniRule"/>
</dbReference>
<dbReference type="GO" id="GO:0006355">
    <property type="term" value="P:regulation of DNA-templated transcription"/>
    <property type="evidence" value="ECO:0007669"/>
    <property type="project" value="UniProtKB-UniRule"/>
</dbReference>
<dbReference type="GO" id="GO:0052150">
    <property type="term" value="P:symbiont-mediated perturbation of host apoptosis"/>
    <property type="evidence" value="ECO:0007669"/>
    <property type="project" value="UniProtKB-KW"/>
</dbReference>
<dbReference type="GO" id="GO:0039648">
    <property type="term" value="P:symbiont-mediated perturbation of host ubiquitin-like protein modification"/>
    <property type="evidence" value="ECO:0007669"/>
    <property type="project" value="UniProtKB-UniRule"/>
</dbReference>
<dbReference type="GO" id="GO:0052170">
    <property type="term" value="P:symbiont-mediated suppression of host innate immune response"/>
    <property type="evidence" value="ECO:0007669"/>
    <property type="project" value="UniProtKB-KW"/>
</dbReference>
<dbReference type="GO" id="GO:0039502">
    <property type="term" value="P:symbiont-mediated suppression of host type I interferon-mediated signaling pathway"/>
    <property type="evidence" value="ECO:0007669"/>
    <property type="project" value="UniProtKB-UniRule"/>
</dbReference>
<dbReference type="Gene3D" id="3.30.240.40">
    <property type="entry name" value="E6 early regulatory protein"/>
    <property type="match status" value="2"/>
</dbReference>
<dbReference type="HAMAP" id="MF_04006">
    <property type="entry name" value="HPV_E6"/>
    <property type="match status" value="1"/>
</dbReference>
<dbReference type="InterPro" id="IPR001334">
    <property type="entry name" value="E6"/>
</dbReference>
<dbReference type="InterPro" id="IPR038575">
    <property type="entry name" value="E6_sf"/>
</dbReference>
<dbReference type="Pfam" id="PF00518">
    <property type="entry name" value="E6"/>
    <property type="match status" value="1"/>
</dbReference>
<dbReference type="SUPFAM" id="SSF161229">
    <property type="entry name" value="E6 C-terminal domain-like"/>
    <property type="match status" value="2"/>
</dbReference>
<organism>
    <name type="scientific">Human papillomavirus 13</name>
    <dbReference type="NCBI Taxonomy" id="10573"/>
    <lineage>
        <taxon>Viruses</taxon>
        <taxon>Monodnaviria</taxon>
        <taxon>Shotokuvirae</taxon>
        <taxon>Cossaviricota</taxon>
        <taxon>Papovaviricetes</taxon>
        <taxon>Zurhausenvirales</taxon>
        <taxon>Papillomaviridae</taxon>
        <taxon>Firstpapillomavirinae</taxon>
        <taxon>Alphapapillomavirus</taxon>
        <taxon>Alphapapillomavirus 10</taxon>
    </lineage>
</organism>
<comment type="function">
    <text evidence="1">Plays a major role in the induction and maintenance of cellular transformation. E6 associates with host UBE3A/E6-AP ubiquitin-protein ligase and modulates its activity. Sequesters tumor suppressor TP53 in the host cytoplasm and modulates its activity by interacting with host EP300 that results in the reduction of TP53 acetylation and activation. In turn, apoptosis induced by DNA damage is inhibited. E6 also protects host keratinocytes from apoptosis by mediating the degradation of host BAK1. May also inhibit host immune response.</text>
</comment>
<comment type="subunit">
    <text evidence="1">Forms homodimers. Interacts with ubiquitin-protein ligase UBE3A/E6-AP; this interaction stimulates UBE3A ubiquitin activity. Interacts with host TP53 and EP300; this interaction inhibits TP53 activity.</text>
</comment>
<comment type="subcellular location">
    <subcellularLocation>
        <location evidence="1">Host cytoplasm</location>
    </subcellularLocation>
    <subcellularLocation>
        <location evidence="1">Host nucleus</location>
    </subcellularLocation>
</comment>
<comment type="miscellaneous">
    <text evidence="1">Belongs to the low risk human alphapapillomavirus family. The cancer-causing human papillomavirus E6 protein has a unique carboxy terminal PDZ domain containing substrate but low risk E6s do not possess this domain.</text>
</comment>
<comment type="similarity">
    <text evidence="2">Belongs to the papillomaviridae E6 protein family.</text>
</comment>
<organismHost>
    <name type="scientific">Homo sapiens</name>
    <name type="common">Human</name>
    <dbReference type="NCBI Taxonomy" id="9606"/>
</organismHost>